<dbReference type="EMBL" id="CP000660">
    <property type="protein sequence ID" value="ABP51297.1"/>
    <property type="molecule type" value="Genomic_DNA"/>
</dbReference>
<dbReference type="SMR" id="A4WLN0"/>
<dbReference type="STRING" id="340102.Pars_1746"/>
<dbReference type="KEGG" id="pas:Pars_1746"/>
<dbReference type="HOGENOM" id="CLU_169299_1_0_2"/>
<dbReference type="OrthoDB" id="56356at2157"/>
<dbReference type="PhylomeDB" id="A4WLN0"/>
<dbReference type="Proteomes" id="UP000001567">
    <property type="component" value="Chromosome"/>
</dbReference>
<dbReference type="GO" id="GO:0048500">
    <property type="term" value="C:signal recognition particle"/>
    <property type="evidence" value="ECO:0007669"/>
    <property type="project" value="UniProtKB-UniRule"/>
</dbReference>
<dbReference type="GO" id="GO:0008312">
    <property type="term" value="F:7S RNA binding"/>
    <property type="evidence" value="ECO:0007669"/>
    <property type="project" value="UniProtKB-UniRule"/>
</dbReference>
<dbReference type="GO" id="GO:0006614">
    <property type="term" value="P:SRP-dependent cotranslational protein targeting to membrane"/>
    <property type="evidence" value="ECO:0007669"/>
    <property type="project" value="InterPro"/>
</dbReference>
<dbReference type="Gene3D" id="3.30.56.30">
    <property type="entry name" value="Signal recognition particle, SRP19-like subunit"/>
    <property type="match status" value="1"/>
</dbReference>
<dbReference type="HAMAP" id="MF_00305">
    <property type="entry name" value="SRP19"/>
    <property type="match status" value="1"/>
</dbReference>
<dbReference type="InterPro" id="IPR002778">
    <property type="entry name" value="Signal_recog_particle_SRP19"/>
</dbReference>
<dbReference type="InterPro" id="IPR036521">
    <property type="entry name" value="SRP19-like_sf"/>
</dbReference>
<dbReference type="InterPro" id="IPR022938">
    <property type="entry name" value="SRP19_arc-type"/>
</dbReference>
<dbReference type="Pfam" id="PF01922">
    <property type="entry name" value="SRP19"/>
    <property type="match status" value="1"/>
</dbReference>
<dbReference type="SUPFAM" id="SSF69695">
    <property type="entry name" value="SRP19"/>
    <property type="match status" value="1"/>
</dbReference>
<name>SRP19_PYRAR</name>
<proteinExistence type="inferred from homology"/>
<sequence>MKKRGGRTLWLVYIDLSVPRSRGRILPRSQAVNKPTLQEMVKALEALGYKYEVYPNKKYPPLWYDDRAQGYVVVKTDEKMRIIAAKVAEKIKQIRG</sequence>
<feature type="chain" id="PRO_0000300750" description="Signal recognition particle 19 kDa protein">
    <location>
        <begin position="1"/>
        <end position="96"/>
    </location>
</feature>
<comment type="function">
    <text evidence="1">Involved in targeting and insertion of nascent membrane proteins into the cytoplasmic membrane. Binds directly to 7S RNA and mediates binding of the 54 kDa subunit of the SRP.</text>
</comment>
<comment type="subunit">
    <text evidence="1">Part of the signal recognition particle protein translocation system, which is composed of SRP and FtsY. Archaeal SRP consists of a 7S RNA molecule of 300 nucleotides and two protein subunits: SRP54 and SRP19.</text>
</comment>
<comment type="subcellular location">
    <subcellularLocation>
        <location evidence="1">Cytoplasm</location>
    </subcellularLocation>
</comment>
<comment type="similarity">
    <text evidence="1">Belongs to the SRP19 family.</text>
</comment>
<protein>
    <recommendedName>
        <fullName evidence="1">Signal recognition particle 19 kDa protein</fullName>
        <shortName evidence="1">SRP19</shortName>
    </recommendedName>
</protein>
<gene>
    <name evidence="1" type="primary">srp19</name>
    <name type="ordered locus">Pars_1746</name>
</gene>
<organism>
    <name type="scientific">Pyrobaculum arsenaticum (strain DSM 13514 / JCM 11321 / PZ6)</name>
    <dbReference type="NCBI Taxonomy" id="340102"/>
    <lineage>
        <taxon>Archaea</taxon>
        <taxon>Thermoproteota</taxon>
        <taxon>Thermoprotei</taxon>
        <taxon>Thermoproteales</taxon>
        <taxon>Thermoproteaceae</taxon>
        <taxon>Pyrobaculum</taxon>
    </lineage>
</organism>
<keyword id="KW-0963">Cytoplasm</keyword>
<keyword id="KW-0687">Ribonucleoprotein</keyword>
<keyword id="KW-0694">RNA-binding</keyword>
<keyword id="KW-0733">Signal recognition particle</keyword>
<reference key="1">
    <citation type="submission" date="2007-04" db="EMBL/GenBank/DDBJ databases">
        <title>Complete sequence of Pyrobaculum arsenaticum DSM 13514.</title>
        <authorList>
            <consortium name="US DOE Joint Genome Institute"/>
            <person name="Copeland A."/>
            <person name="Lucas S."/>
            <person name="Lapidus A."/>
            <person name="Barry K."/>
            <person name="Glavina del Rio T."/>
            <person name="Dalin E."/>
            <person name="Tice H."/>
            <person name="Pitluck S."/>
            <person name="Chain P."/>
            <person name="Malfatti S."/>
            <person name="Shin M."/>
            <person name="Vergez L."/>
            <person name="Schmutz J."/>
            <person name="Larimer F."/>
            <person name="Land M."/>
            <person name="Hauser L."/>
            <person name="Kyrpides N."/>
            <person name="Mikhailova N."/>
            <person name="Cozen A.E."/>
            <person name="Fitz-Gibbon S.T."/>
            <person name="House C.H."/>
            <person name="Saltikov C."/>
            <person name="Lowe T.M."/>
            <person name="Richardson P."/>
        </authorList>
    </citation>
    <scope>NUCLEOTIDE SEQUENCE [LARGE SCALE GENOMIC DNA]</scope>
    <source>
        <strain>ATCC 700994 / DSM 13514 / JCM 11321 / PZ6</strain>
    </source>
</reference>
<accession>A4WLN0</accession>
<evidence type="ECO:0000255" key="1">
    <source>
        <dbReference type="HAMAP-Rule" id="MF_00305"/>
    </source>
</evidence>